<evidence type="ECO:0000250" key="1">
    <source>
        <dbReference type="UniProtKB" id="P32684"/>
    </source>
</evidence>
<evidence type="ECO:0000255" key="2">
    <source>
        <dbReference type="PROSITE-ProRule" id="PRU00182"/>
    </source>
</evidence>
<evidence type="ECO:0000256" key="3">
    <source>
        <dbReference type="SAM" id="MobiDB-lite"/>
    </source>
</evidence>
<evidence type="ECO:0000305" key="4"/>
<gene>
    <name type="primary">rluF</name>
    <name type="ordered locus">Z5620</name>
    <name type="ordered locus">ECs5005</name>
</gene>
<proteinExistence type="inferred from homology"/>
<protein>
    <recommendedName>
        <fullName evidence="1">Dual-specificity RNA pseudouridine synthase RluF</fullName>
        <ecNumber evidence="1">5.4.99.-</ecNumber>
        <ecNumber evidence="1">5.4.99.21</ecNumber>
    </recommendedName>
    <alternativeName>
        <fullName evidence="1">23S rRNA pseudouridine(2604) synthase</fullName>
    </alternativeName>
    <alternativeName>
        <fullName evidence="1">Ribosomal large subunit pseudouridine synthase F</fullName>
    </alternativeName>
    <alternativeName>
        <fullName evidence="1">rRNA pseudouridylate synthase F</fullName>
    </alternativeName>
    <alternativeName>
        <fullName evidence="1">rRNA-uridine isomerase F</fullName>
    </alternativeName>
    <alternativeName>
        <fullName evidence="1">tRNA(Tyr) pseudouridine(35) synthase</fullName>
    </alternativeName>
</protein>
<sequence length="290" mass="32404">MLPDSSVRLNKYISESGICSRREADRYIEQGNVFLNGKRATIGDQVKPGDVVKVNGQLIEPREAEDLVLIALNKPVGIVSTTEDGERDNIVDFVNHSKRVFPIGRLDKDSQGLIFLTNHGDLVNKILRAGNDHEKEYLVTVDKPITDEFIRGMGAGVPILGTVTKKCKVKKEAPFVFRITLVQGLNRQIRRMCEHFGYEVKKLERTRIMNVSLSGIPLGEWRDLTDDELIDLFKLIENSSSEAKPKAKAKPKTAGIKRPVVKMEKTAEKGGRPASNGKRFTSPGRKKKGR</sequence>
<keyword id="KW-0413">Isomerase</keyword>
<keyword id="KW-1185">Reference proteome</keyword>
<keyword id="KW-0694">RNA-binding</keyword>
<keyword id="KW-0698">rRNA processing</keyword>
<keyword id="KW-0819">tRNA processing</keyword>
<dbReference type="EC" id="5.4.99.-" evidence="1"/>
<dbReference type="EC" id="5.4.99.21" evidence="1"/>
<dbReference type="EMBL" id="AE005174">
    <property type="protein sequence ID" value="AAG59221.1"/>
    <property type="molecule type" value="Genomic_DNA"/>
</dbReference>
<dbReference type="EMBL" id="BA000007">
    <property type="protein sequence ID" value="BAB38428.1"/>
    <property type="molecule type" value="Genomic_DNA"/>
</dbReference>
<dbReference type="PIR" id="A86095">
    <property type="entry name" value="A86095"/>
</dbReference>
<dbReference type="PIR" id="E91254">
    <property type="entry name" value="E91254"/>
</dbReference>
<dbReference type="RefSeq" id="NP_313032.1">
    <property type="nucleotide sequence ID" value="NC_002695.1"/>
</dbReference>
<dbReference type="RefSeq" id="WP_000936361.1">
    <property type="nucleotide sequence ID" value="NZ_VOAI01000027.1"/>
</dbReference>
<dbReference type="SMR" id="Q8X4L9"/>
<dbReference type="STRING" id="155864.Z5620"/>
<dbReference type="GeneID" id="75169475"/>
<dbReference type="GeneID" id="914336"/>
<dbReference type="KEGG" id="ece:Z5620"/>
<dbReference type="KEGG" id="ecs:ECs_5005"/>
<dbReference type="PATRIC" id="fig|386585.9.peg.5226"/>
<dbReference type="eggNOG" id="COG1187">
    <property type="taxonomic scope" value="Bacteria"/>
</dbReference>
<dbReference type="HOGENOM" id="CLU_024979_6_1_6"/>
<dbReference type="OMA" id="SMEFAPF"/>
<dbReference type="Proteomes" id="UP000000558">
    <property type="component" value="Chromosome"/>
</dbReference>
<dbReference type="Proteomes" id="UP000002519">
    <property type="component" value="Chromosome"/>
</dbReference>
<dbReference type="GO" id="GO:0160138">
    <property type="term" value="F:23S rRNA pseudouridine(2604) synthase activity"/>
    <property type="evidence" value="ECO:0007669"/>
    <property type="project" value="UniProtKB-EC"/>
</dbReference>
<dbReference type="GO" id="GO:0003723">
    <property type="term" value="F:RNA binding"/>
    <property type="evidence" value="ECO:0007669"/>
    <property type="project" value="UniProtKB-KW"/>
</dbReference>
<dbReference type="GO" id="GO:0000455">
    <property type="term" value="P:enzyme-directed rRNA pseudouridine synthesis"/>
    <property type="evidence" value="ECO:0007669"/>
    <property type="project" value="UniProtKB-ARBA"/>
</dbReference>
<dbReference type="GO" id="GO:0008033">
    <property type="term" value="P:tRNA processing"/>
    <property type="evidence" value="ECO:0007669"/>
    <property type="project" value="UniProtKB-KW"/>
</dbReference>
<dbReference type="CDD" id="cd02554">
    <property type="entry name" value="PseudoU_synth_RluF"/>
    <property type="match status" value="1"/>
</dbReference>
<dbReference type="CDD" id="cd00165">
    <property type="entry name" value="S4"/>
    <property type="match status" value="1"/>
</dbReference>
<dbReference type="FunFam" id="3.10.290.10:FF:000003">
    <property type="entry name" value="Pseudouridine synthase"/>
    <property type="match status" value="1"/>
</dbReference>
<dbReference type="FunFam" id="3.30.70.1560:FF:000002">
    <property type="entry name" value="Pseudouridine synthase"/>
    <property type="match status" value="1"/>
</dbReference>
<dbReference type="Gene3D" id="3.30.70.1560">
    <property type="entry name" value="Alpha-L RNA-binding motif"/>
    <property type="match status" value="1"/>
</dbReference>
<dbReference type="Gene3D" id="3.30.70.580">
    <property type="entry name" value="Pseudouridine synthase I, catalytic domain, N-terminal subdomain"/>
    <property type="match status" value="1"/>
</dbReference>
<dbReference type="Gene3D" id="3.10.290.10">
    <property type="entry name" value="RNA-binding S4 domain"/>
    <property type="match status" value="1"/>
</dbReference>
<dbReference type="InterPro" id="IPR042092">
    <property type="entry name" value="PsdUridine_s_RsuA/RluB/E/F_cat"/>
</dbReference>
<dbReference type="InterPro" id="IPR020103">
    <property type="entry name" value="PsdUridine_synth_cat_dom_sf"/>
</dbReference>
<dbReference type="InterPro" id="IPR006145">
    <property type="entry name" value="PsdUridine_synth_RsuA/RluA"/>
</dbReference>
<dbReference type="InterPro" id="IPR000748">
    <property type="entry name" value="PsdUridine_synth_RsuA/RluB/E/F"/>
</dbReference>
<dbReference type="InterPro" id="IPR018496">
    <property type="entry name" value="PsdUridine_synth_RsuA/RluB_CS"/>
</dbReference>
<dbReference type="InterPro" id="IPR050343">
    <property type="entry name" value="RsuA_PseudoU_synthase"/>
</dbReference>
<dbReference type="InterPro" id="IPR002942">
    <property type="entry name" value="S4_RNA-bd"/>
</dbReference>
<dbReference type="InterPro" id="IPR036986">
    <property type="entry name" value="S4_RNA-bd_sf"/>
</dbReference>
<dbReference type="InterPro" id="IPR020094">
    <property type="entry name" value="TruA/RsuA/RluB/E/F_N"/>
</dbReference>
<dbReference type="NCBIfam" id="NF007784">
    <property type="entry name" value="PRK10475.1"/>
    <property type="match status" value="1"/>
</dbReference>
<dbReference type="NCBIfam" id="TIGR00093">
    <property type="entry name" value="pseudouridine synthase"/>
    <property type="match status" value="1"/>
</dbReference>
<dbReference type="PANTHER" id="PTHR47683">
    <property type="entry name" value="PSEUDOURIDINE SYNTHASE FAMILY PROTEIN-RELATED"/>
    <property type="match status" value="1"/>
</dbReference>
<dbReference type="PANTHER" id="PTHR47683:SF2">
    <property type="entry name" value="RNA-BINDING S4 DOMAIN-CONTAINING PROTEIN"/>
    <property type="match status" value="1"/>
</dbReference>
<dbReference type="Pfam" id="PF00849">
    <property type="entry name" value="PseudoU_synth_2"/>
    <property type="match status" value="1"/>
</dbReference>
<dbReference type="Pfam" id="PF01479">
    <property type="entry name" value="S4"/>
    <property type="match status" value="1"/>
</dbReference>
<dbReference type="SMART" id="SM00363">
    <property type="entry name" value="S4"/>
    <property type="match status" value="1"/>
</dbReference>
<dbReference type="SUPFAM" id="SSF55174">
    <property type="entry name" value="Alpha-L RNA-binding motif"/>
    <property type="match status" value="1"/>
</dbReference>
<dbReference type="SUPFAM" id="SSF55120">
    <property type="entry name" value="Pseudouridine synthase"/>
    <property type="match status" value="1"/>
</dbReference>
<dbReference type="PROSITE" id="PS01149">
    <property type="entry name" value="PSI_RSU"/>
    <property type="match status" value="1"/>
</dbReference>
<dbReference type="PROSITE" id="PS50889">
    <property type="entry name" value="S4"/>
    <property type="match status" value="1"/>
</dbReference>
<reference key="1">
    <citation type="journal article" date="2001" name="Nature">
        <title>Genome sequence of enterohaemorrhagic Escherichia coli O157:H7.</title>
        <authorList>
            <person name="Perna N.T."/>
            <person name="Plunkett G. III"/>
            <person name="Burland V."/>
            <person name="Mau B."/>
            <person name="Glasner J.D."/>
            <person name="Rose D.J."/>
            <person name="Mayhew G.F."/>
            <person name="Evans P.S."/>
            <person name="Gregor J."/>
            <person name="Kirkpatrick H.A."/>
            <person name="Posfai G."/>
            <person name="Hackett J."/>
            <person name="Klink S."/>
            <person name="Boutin A."/>
            <person name="Shao Y."/>
            <person name="Miller L."/>
            <person name="Grotbeck E.J."/>
            <person name="Davis N.W."/>
            <person name="Lim A."/>
            <person name="Dimalanta E.T."/>
            <person name="Potamousis K."/>
            <person name="Apodaca J."/>
            <person name="Anantharaman T.S."/>
            <person name="Lin J."/>
            <person name="Yen G."/>
            <person name="Schwartz D.C."/>
            <person name="Welch R.A."/>
            <person name="Blattner F.R."/>
        </authorList>
    </citation>
    <scope>NUCLEOTIDE SEQUENCE [LARGE SCALE GENOMIC DNA]</scope>
    <source>
        <strain>O157:H7 / EDL933 / ATCC 700927 / EHEC</strain>
    </source>
</reference>
<reference key="2">
    <citation type="journal article" date="2001" name="DNA Res.">
        <title>Complete genome sequence of enterohemorrhagic Escherichia coli O157:H7 and genomic comparison with a laboratory strain K-12.</title>
        <authorList>
            <person name="Hayashi T."/>
            <person name="Makino K."/>
            <person name="Ohnishi M."/>
            <person name="Kurokawa K."/>
            <person name="Ishii K."/>
            <person name="Yokoyama K."/>
            <person name="Han C.-G."/>
            <person name="Ohtsubo E."/>
            <person name="Nakayama K."/>
            <person name="Murata T."/>
            <person name="Tanaka M."/>
            <person name="Tobe T."/>
            <person name="Iida T."/>
            <person name="Takami H."/>
            <person name="Honda T."/>
            <person name="Sasakawa C."/>
            <person name="Ogasawara N."/>
            <person name="Yasunaga T."/>
            <person name="Kuhara S."/>
            <person name="Shiba T."/>
            <person name="Hattori M."/>
            <person name="Shinagawa H."/>
        </authorList>
    </citation>
    <scope>NUCLEOTIDE SEQUENCE [LARGE SCALE GENOMIC DNA]</scope>
    <source>
        <strain>O157:H7 / Sakai / RIMD 0509952 / EHEC</strain>
    </source>
</reference>
<accession>Q8X4L9</accession>
<comment type="function">
    <text evidence="1">Dual specificity enzyme that catalyzes the synthesis of pseudouridine from uracil-2604 in 23S ribosomal RNA and from uracil-35 in the anticodon of tRNA(Tyr).</text>
</comment>
<comment type="catalytic activity">
    <reaction evidence="1">
        <text>uridine(2604) in 23S rRNA = pseudouridine(2604) in 23S rRNA</text>
        <dbReference type="Rhea" id="RHEA:38875"/>
        <dbReference type="Rhea" id="RHEA-COMP:10093"/>
        <dbReference type="Rhea" id="RHEA-COMP:10094"/>
        <dbReference type="ChEBI" id="CHEBI:65314"/>
        <dbReference type="ChEBI" id="CHEBI:65315"/>
        <dbReference type="EC" id="5.4.99.21"/>
    </reaction>
</comment>
<comment type="catalytic activity">
    <reaction evidence="1">
        <text>uridine(35) in tRNA(Tyr) = pseudouridine(35) in tRNA(Tyr)</text>
        <dbReference type="Rhea" id="RHEA:60556"/>
        <dbReference type="Rhea" id="RHEA-COMP:15607"/>
        <dbReference type="Rhea" id="RHEA-COMP:15608"/>
        <dbReference type="ChEBI" id="CHEBI:65314"/>
        <dbReference type="ChEBI" id="CHEBI:65315"/>
    </reaction>
</comment>
<comment type="subunit">
    <text evidence="1">Monomer.</text>
</comment>
<comment type="similarity">
    <text evidence="4">Belongs to the pseudouridine synthase RsuA family.</text>
</comment>
<name>RLUF_ECO57</name>
<organism>
    <name type="scientific">Escherichia coli O157:H7</name>
    <dbReference type="NCBI Taxonomy" id="83334"/>
    <lineage>
        <taxon>Bacteria</taxon>
        <taxon>Pseudomonadati</taxon>
        <taxon>Pseudomonadota</taxon>
        <taxon>Gammaproteobacteria</taxon>
        <taxon>Enterobacterales</taxon>
        <taxon>Enterobacteriaceae</taxon>
        <taxon>Escherichia</taxon>
    </lineage>
</organism>
<feature type="chain" id="PRO_0000100018" description="Dual-specificity RNA pseudouridine synthase RluF">
    <location>
        <begin position="1"/>
        <end position="290"/>
    </location>
</feature>
<feature type="domain" description="S4 RNA-binding" evidence="2">
    <location>
        <begin position="7"/>
        <end position="72"/>
    </location>
</feature>
<feature type="region of interest" description="Interaction with RNA" evidence="1">
    <location>
        <begin position="105"/>
        <end position="108"/>
    </location>
</feature>
<feature type="region of interest" description="Interaction with RNA" evidence="1">
    <location>
        <begin position="187"/>
        <end position="190"/>
    </location>
</feature>
<feature type="region of interest" description="Disordered" evidence="3">
    <location>
        <begin position="241"/>
        <end position="290"/>
    </location>
</feature>
<feature type="compositionally biased region" description="Basic and acidic residues" evidence="3">
    <location>
        <begin position="261"/>
        <end position="271"/>
    </location>
</feature>
<feature type="active site" description="Nucleophile" evidence="1">
    <location>
        <position position="107"/>
    </location>
</feature>